<organism>
    <name type="scientific">Cupriavidus pinatubonensis (strain JMP 134 / LMG 1197)</name>
    <name type="common">Cupriavidus necator (strain JMP 134)</name>
    <dbReference type="NCBI Taxonomy" id="264198"/>
    <lineage>
        <taxon>Bacteria</taxon>
        <taxon>Pseudomonadati</taxon>
        <taxon>Pseudomonadota</taxon>
        <taxon>Betaproteobacteria</taxon>
        <taxon>Burkholderiales</taxon>
        <taxon>Burkholderiaceae</taxon>
        <taxon>Cupriavidus</taxon>
    </lineage>
</organism>
<dbReference type="EMBL" id="CP000091">
    <property type="protein sequence ID" value="AAZ64880.1"/>
    <property type="molecule type" value="Genomic_DNA"/>
</dbReference>
<dbReference type="SMR" id="Q46PQ4"/>
<dbReference type="STRING" id="264198.Reut_B5535"/>
<dbReference type="KEGG" id="reu:Reut_B5535"/>
<dbReference type="eggNOG" id="COG0480">
    <property type="taxonomic scope" value="Bacteria"/>
</dbReference>
<dbReference type="HOGENOM" id="CLU_002794_4_1_4"/>
<dbReference type="OrthoDB" id="9804431at2"/>
<dbReference type="GO" id="GO:0005737">
    <property type="term" value="C:cytoplasm"/>
    <property type="evidence" value="ECO:0007669"/>
    <property type="project" value="UniProtKB-SubCell"/>
</dbReference>
<dbReference type="GO" id="GO:0005525">
    <property type="term" value="F:GTP binding"/>
    <property type="evidence" value="ECO:0007669"/>
    <property type="project" value="UniProtKB-UniRule"/>
</dbReference>
<dbReference type="GO" id="GO:0003924">
    <property type="term" value="F:GTPase activity"/>
    <property type="evidence" value="ECO:0007669"/>
    <property type="project" value="InterPro"/>
</dbReference>
<dbReference type="GO" id="GO:0097216">
    <property type="term" value="F:guanosine tetraphosphate binding"/>
    <property type="evidence" value="ECO:0007669"/>
    <property type="project" value="UniProtKB-ARBA"/>
</dbReference>
<dbReference type="GO" id="GO:0003746">
    <property type="term" value="F:translation elongation factor activity"/>
    <property type="evidence" value="ECO:0007669"/>
    <property type="project" value="UniProtKB-UniRule"/>
</dbReference>
<dbReference type="GO" id="GO:0032790">
    <property type="term" value="P:ribosome disassembly"/>
    <property type="evidence" value="ECO:0007669"/>
    <property type="project" value="TreeGrafter"/>
</dbReference>
<dbReference type="CDD" id="cd01886">
    <property type="entry name" value="EF-G"/>
    <property type="match status" value="1"/>
</dbReference>
<dbReference type="CDD" id="cd16262">
    <property type="entry name" value="EFG_III"/>
    <property type="match status" value="1"/>
</dbReference>
<dbReference type="CDD" id="cd01434">
    <property type="entry name" value="EFG_mtEFG1_IV"/>
    <property type="match status" value="1"/>
</dbReference>
<dbReference type="CDD" id="cd03713">
    <property type="entry name" value="EFG_mtEFG_C"/>
    <property type="match status" value="1"/>
</dbReference>
<dbReference type="CDD" id="cd04088">
    <property type="entry name" value="EFG_mtEFG_II"/>
    <property type="match status" value="1"/>
</dbReference>
<dbReference type="FunFam" id="2.40.30.10:FF:000006">
    <property type="entry name" value="Elongation factor G"/>
    <property type="match status" value="1"/>
</dbReference>
<dbReference type="FunFam" id="3.30.230.10:FF:000003">
    <property type="entry name" value="Elongation factor G"/>
    <property type="match status" value="1"/>
</dbReference>
<dbReference type="FunFam" id="3.30.70.240:FF:000001">
    <property type="entry name" value="Elongation factor G"/>
    <property type="match status" value="1"/>
</dbReference>
<dbReference type="FunFam" id="3.30.70.870:FF:000001">
    <property type="entry name" value="Elongation factor G"/>
    <property type="match status" value="1"/>
</dbReference>
<dbReference type="FunFam" id="3.40.50.300:FF:000029">
    <property type="entry name" value="Elongation factor G"/>
    <property type="match status" value="1"/>
</dbReference>
<dbReference type="Gene3D" id="3.30.230.10">
    <property type="match status" value="1"/>
</dbReference>
<dbReference type="Gene3D" id="3.30.70.240">
    <property type="match status" value="1"/>
</dbReference>
<dbReference type="Gene3D" id="3.30.70.870">
    <property type="entry name" value="Elongation Factor G (Translational Gtpase), domain 3"/>
    <property type="match status" value="1"/>
</dbReference>
<dbReference type="Gene3D" id="3.40.50.300">
    <property type="entry name" value="P-loop containing nucleotide triphosphate hydrolases"/>
    <property type="match status" value="1"/>
</dbReference>
<dbReference type="Gene3D" id="2.40.30.10">
    <property type="entry name" value="Translation factors"/>
    <property type="match status" value="1"/>
</dbReference>
<dbReference type="HAMAP" id="MF_00054_B">
    <property type="entry name" value="EF_G_EF_2_B"/>
    <property type="match status" value="1"/>
</dbReference>
<dbReference type="InterPro" id="IPR041095">
    <property type="entry name" value="EFG_II"/>
</dbReference>
<dbReference type="InterPro" id="IPR009022">
    <property type="entry name" value="EFG_III"/>
</dbReference>
<dbReference type="InterPro" id="IPR035647">
    <property type="entry name" value="EFG_III/V"/>
</dbReference>
<dbReference type="InterPro" id="IPR047872">
    <property type="entry name" value="EFG_IV"/>
</dbReference>
<dbReference type="InterPro" id="IPR035649">
    <property type="entry name" value="EFG_V"/>
</dbReference>
<dbReference type="InterPro" id="IPR000640">
    <property type="entry name" value="EFG_V-like"/>
</dbReference>
<dbReference type="InterPro" id="IPR004161">
    <property type="entry name" value="EFTu-like_2"/>
</dbReference>
<dbReference type="InterPro" id="IPR031157">
    <property type="entry name" value="G_TR_CS"/>
</dbReference>
<dbReference type="InterPro" id="IPR027417">
    <property type="entry name" value="P-loop_NTPase"/>
</dbReference>
<dbReference type="InterPro" id="IPR020568">
    <property type="entry name" value="Ribosomal_Su5_D2-typ_SF"/>
</dbReference>
<dbReference type="InterPro" id="IPR014721">
    <property type="entry name" value="Ribsml_uS5_D2-typ_fold_subgr"/>
</dbReference>
<dbReference type="InterPro" id="IPR005225">
    <property type="entry name" value="Small_GTP-bd"/>
</dbReference>
<dbReference type="InterPro" id="IPR000795">
    <property type="entry name" value="T_Tr_GTP-bd_dom"/>
</dbReference>
<dbReference type="InterPro" id="IPR009000">
    <property type="entry name" value="Transl_B-barrel_sf"/>
</dbReference>
<dbReference type="InterPro" id="IPR004540">
    <property type="entry name" value="Transl_elong_EFG/EF2"/>
</dbReference>
<dbReference type="InterPro" id="IPR005517">
    <property type="entry name" value="Transl_elong_EFG/EF2_IV"/>
</dbReference>
<dbReference type="NCBIfam" id="TIGR00484">
    <property type="entry name" value="EF-G"/>
    <property type="match status" value="1"/>
</dbReference>
<dbReference type="NCBIfam" id="NF009379">
    <property type="entry name" value="PRK12740.1-3"/>
    <property type="match status" value="1"/>
</dbReference>
<dbReference type="NCBIfam" id="NF009381">
    <property type="entry name" value="PRK12740.1-5"/>
    <property type="match status" value="1"/>
</dbReference>
<dbReference type="NCBIfam" id="TIGR00231">
    <property type="entry name" value="small_GTP"/>
    <property type="match status" value="1"/>
</dbReference>
<dbReference type="PANTHER" id="PTHR43261:SF1">
    <property type="entry name" value="RIBOSOME-RELEASING FACTOR 2, MITOCHONDRIAL"/>
    <property type="match status" value="1"/>
</dbReference>
<dbReference type="PANTHER" id="PTHR43261">
    <property type="entry name" value="TRANSLATION ELONGATION FACTOR G-RELATED"/>
    <property type="match status" value="1"/>
</dbReference>
<dbReference type="Pfam" id="PF00679">
    <property type="entry name" value="EFG_C"/>
    <property type="match status" value="1"/>
</dbReference>
<dbReference type="Pfam" id="PF14492">
    <property type="entry name" value="EFG_III"/>
    <property type="match status" value="1"/>
</dbReference>
<dbReference type="Pfam" id="PF03764">
    <property type="entry name" value="EFG_IV"/>
    <property type="match status" value="1"/>
</dbReference>
<dbReference type="Pfam" id="PF00009">
    <property type="entry name" value="GTP_EFTU"/>
    <property type="match status" value="1"/>
</dbReference>
<dbReference type="Pfam" id="PF03144">
    <property type="entry name" value="GTP_EFTU_D2"/>
    <property type="match status" value="1"/>
</dbReference>
<dbReference type="PRINTS" id="PR00315">
    <property type="entry name" value="ELONGATNFCT"/>
</dbReference>
<dbReference type="SMART" id="SM00838">
    <property type="entry name" value="EFG_C"/>
    <property type="match status" value="1"/>
</dbReference>
<dbReference type="SMART" id="SM00889">
    <property type="entry name" value="EFG_IV"/>
    <property type="match status" value="1"/>
</dbReference>
<dbReference type="SUPFAM" id="SSF54980">
    <property type="entry name" value="EF-G C-terminal domain-like"/>
    <property type="match status" value="2"/>
</dbReference>
<dbReference type="SUPFAM" id="SSF52540">
    <property type="entry name" value="P-loop containing nucleoside triphosphate hydrolases"/>
    <property type="match status" value="1"/>
</dbReference>
<dbReference type="SUPFAM" id="SSF54211">
    <property type="entry name" value="Ribosomal protein S5 domain 2-like"/>
    <property type="match status" value="1"/>
</dbReference>
<dbReference type="SUPFAM" id="SSF50447">
    <property type="entry name" value="Translation proteins"/>
    <property type="match status" value="1"/>
</dbReference>
<dbReference type="PROSITE" id="PS00301">
    <property type="entry name" value="G_TR_1"/>
    <property type="match status" value="1"/>
</dbReference>
<dbReference type="PROSITE" id="PS51722">
    <property type="entry name" value="G_TR_2"/>
    <property type="match status" value="1"/>
</dbReference>
<feature type="chain" id="PRO_0000225235" description="Elongation factor G 2">
    <location>
        <begin position="1"/>
        <end position="701"/>
    </location>
</feature>
<feature type="domain" description="tr-type G">
    <location>
        <begin position="8"/>
        <end position="290"/>
    </location>
</feature>
<feature type="binding site" evidence="1">
    <location>
        <begin position="17"/>
        <end position="24"/>
    </location>
    <ligand>
        <name>GTP</name>
        <dbReference type="ChEBI" id="CHEBI:37565"/>
    </ligand>
</feature>
<feature type="binding site" evidence="1">
    <location>
        <begin position="88"/>
        <end position="92"/>
    </location>
    <ligand>
        <name>GTP</name>
        <dbReference type="ChEBI" id="CHEBI:37565"/>
    </ligand>
</feature>
<feature type="binding site" evidence="1">
    <location>
        <begin position="142"/>
        <end position="145"/>
    </location>
    <ligand>
        <name>GTP</name>
        <dbReference type="ChEBI" id="CHEBI:37565"/>
    </ligand>
</feature>
<comment type="function">
    <text evidence="1">Catalyzes the GTP-dependent ribosomal translocation step during translation elongation. During this step, the ribosome changes from the pre-translocational (PRE) to the post-translocational (POST) state as the newly formed A-site-bound peptidyl-tRNA and P-site-bound deacylated tRNA move to the P and E sites, respectively. Catalyzes the coordinated movement of the two tRNA molecules, the mRNA and conformational changes in the ribosome.</text>
</comment>
<comment type="subcellular location">
    <subcellularLocation>
        <location evidence="1">Cytoplasm</location>
    </subcellularLocation>
</comment>
<comment type="similarity">
    <text evidence="1">Belongs to the TRAFAC class translation factor GTPase superfamily. Classic translation factor GTPase family. EF-G/EF-2 subfamily.</text>
</comment>
<name>EFG2_CUPPJ</name>
<reference key="1">
    <citation type="journal article" date="2010" name="PLoS ONE">
        <title>The complete multipartite genome sequence of Cupriavidus necator JMP134, a versatile pollutant degrader.</title>
        <authorList>
            <person name="Lykidis A."/>
            <person name="Perez-Pantoja D."/>
            <person name="Ledger T."/>
            <person name="Mavromatis K."/>
            <person name="Anderson I.J."/>
            <person name="Ivanova N.N."/>
            <person name="Hooper S.D."/>
            <person name="Lapidus A."/>
            <person name="Lucas S."/>
            <person name="Gonzalez B."/>
            <person name="Kyrpides N.C."/>
        </authorList>
    </citation>
    <scope>NUCLEOTIDE SEQUENCE [LARGE SCALE GENOMIC DNA]</scope>
    <source>
        <strain>JMP134 / LMG 1197</strain>
    </source>
</reference>
<protein>
    <recommendedName>
        <fullName evidence="1">Elongation factor G 2</fullName>
        <shortName evidence="1">EF-G 2</shortName>
    </recommendedName>
</protein>
<keyword id="KW-0963">Cytoplasm</keyword>
<keyword id="KW-0251">Elongation factor</keyword>
<keyword id="KW-0342">GTP-binding</keyword>
<keyword id="KW-0547">Nucleotide-binding</keyword>
<keyword id="KW-0648">Protein biosynthesis</keyword>
<sequence length="701" mass="77149">MSRKTPIERYRNIGISAHIDAGKTTTTERILFYTGVNHKLGEVHDGAATMDWMEQEQERGITITSAATTAFWKGMAGNYPEHRINIIDTPGHVDFTIEVERSMRVLDGACMVYDAVGGVQPQSETVWRQANKYNVPRIAFVNKMDRVGADFFRVQTQIADRLKGRAVPIQIPVGAEDHFQGVVDLVKMKAVVWDDASQGVRFEYVDIPAELLPVAQEWRDKMIEAAAEADEALLEQYLAGEPLTETQIKQGLRKRTIANEIVPMLCGSAFKNKGVQSMLDAVIDYLPSPADVPAILGHTEDDREAERHPSDDEPFSALAFKIMTDPFVGQLIFFRVYSGVVNSGDTVYNPVKGKRERLGRILQMHANVRQEIKEVRAGDIAAAVGLKEATTGDTLCDPGKVIILERMSFPEPVISQAVEPKTKADQEKMGIALNRLAQEDPSFRVTTDEESGQTIISGMGELHLEILVDRMRREFGVEASVGKPQVAYRETIRQGVKDVEGKFIKQSGGRGQYGHVVLNLEPMPHGGGYEFVDAIKGGVVPREFIPAVDKGIRETLTAGVLAGYPVVDVKATLVFGSYHDVDSNENAFRMAGSMAFKEGMKRARPILLEPMMSVEVETPEEFTGNVMGDLSSRRGMVHGMEEIAGGGGKVVRAEVPLATMFGYSTSLRSLTQGRATFTMEFKHYAEAPANVAEAVINAKKA</sequence>
<gene>
    <name evidence="1" type="primary">fusA2</name>
    <name type="ordered locus">Reut_B5535</name>
</gene>
<accession>Q46PQ4</accession>
<evidence type="ECO:0000255" key="1">
    <source>
        <dbReference type="HAMAP-Rule" id="MF_00054"/>
    </source>
</evidence>
<proteinExistence type="inferred from homology"/>